<gene>
    <name type="primary">nop10</name>
    <name type="synonym">nola3</name>
    <name type="ORF">DDB_G0288347</name>
</gene>
<keyword id="KW-0539">Nucleus</keyword>
<keyword id="KW-1185">Reference proteome</keyword>
<keyword id="KW-0687">Ribonucleoprotein</keyword>
<keyword id="KW-0690">Ribosome biogenesis</keyword>
<keyword id="KW-0698">rRNA processing</keyword>
<name>NOP10_DICDI</name>
<accession>Q54J26</accession>
<dbReference type="EMBL" id="AAFI02000111">
    <property type="protein sequence ID" value="EAL63270.1"/>
    <property type="molecule type" value="Genomic_DNA"/>
</dbReference>
<dbReference type="RefSeq" id="XP_636775.1">
    <property type="nucleotide sequence ID" value="XM_631683.1"/>
</dbReference>
<dbReference type="SMR" id="Q54J26"/>
<dbReference type="FunCoup" id="Q54J26">
    <property type="interactions" value="419"/>
</dbReference>
<dbReference type="STRING" id="44689.Q54J26"/>
<dbReference type="PaxDb" id="44689-DDB0235394"/>
<dbReference type="EnsemblProtists" id="EAL63270">
    <property type="protein sequence ID" value="EAL63270"/>
    <property type="gene ID" value="DDB_G0288347"/>
</dbReference>
<dbReference type="GeneID" id="8626578"/>
<dbReference type="KEGG" id="ddi:DDB_G0288347"/>
<dbReference type="dictyBase" id="DDB_G0288347">
    <property type="gene designation" value="nola3"/>
</dbReference>
<dbReference type="VEuPathDB" id="AmoebaDB:DDB_G0288347"/>
<dbReference type="eggNOG" id="KOG3503">
    <property type="taxonomic scope" value="Eukaryota"/>
</dbReference>
<dbReference type="HOGENOM" id="CLU_184680_1_0_1"/>
<dbReference type="InParanoid" id="Q54J26"/>
<dbReference type="OMA" id="HRIIIKK"/>
<dbReference type="PhylomeDB" id="Q54J26"/>
<dbReference type="PRO" id="PR:Q54J26"/>
<dbReference type="Proteomes" id="UP000002195">
    <property type="component" value="Chromosome 5"/>
</dbReference>
<dbReference type="GO" id="GO:0031429">
    <property type="term" value="C:box H/ACA snoRNP complex"/>
    <property type="evidence" value="ECO:0000318"/>
    <property type="project" value="GO_Central"/>
</dbReference>
<dbReference type="GO" id="GO:0005732">
    <property type="term" value="C:sno(s)RNA-containing ribonucleoprotein complex"/>
    <property type="evidence" value="ECO:0000250"/>
    <property type="project" value="dictyBase"/>
</dbReference>
<dbReference type="GO" id="GO:0003723">
    <property type="term" value="F:RNA binding"/>
    <property type="evidence" value="ECO:0000250"/>
    <property type="project" value="dictyBase"/>
</dbReference>
<dbReference type="GO" id="GO:0030515">
    <property type="term" value="F:snoRNA binding"/>
    <property type="evidence" value="ECO:0007669"/>
    <property type="project" value="InterPro"/>
</dbReference>
<dbReference type="GO" id="GO:0070034">
    <property type="term" value="F:telomerase RNA binding"/>
    <property type="evidence" value="ECO:0000318"/>
    <property type="project" value="GO_Central"/>
</dbReference>
<dbReference type="GO" id="GO:0006364">
    <property type="term" value="P:rRNA processing"/>
    <property type="evidence" value="ECO:0000305"/>
    <property type="project" value="dictyBase"/>
</dbReference>
<dbReference type="GO" id="GO:0031118">
    <property type="term" value="P:rRNA pseudouridine synthesis"/>
    <property type="evidence" value="ECO:0000318"/>
    <property type="project" value="GO_Central"/>
</dbReference>
<dbReference type="GO" id="GO:0031120">
    <property type="term" value="P:snRNA pseudouridine synthesis"/>
    <property type="evidence" value="ECO:0000318"/>
    <property type="project" value="GO_Central"/>
</dbReference>
<dbReference type="FunFam" id="2.20.28.40:FF:000001">
    <property type="entry name" value="H/ACA ribonucleoprotein complex subunit 3"/>
    <property type="match status" value="1"/>
</dbReference>
<dbReference type="Gene3D" id="2.20.28.40">
    <property type="entry name" value="H/ACA ribonucleoprotein complex, subunit Nop10"/>
    <property type="match status" value="1"/>
</dbReference>
<dbReference type="InterPro" id="IPR007264">
    <property type="entry name" value="H/ACA_rnp_Nop10"/>
</dbReference>
<dbReference type="InterPro" id="IPR036756">
    <property type="entry name" value="H/ACA_rnp_Nop10_sf"/>
</dbReference>
<dbReference type="PANTHER" id="PTHR13305:SF0">
    <property type="entry name" value="H_ACA RIBONUCLEOPROTEIN COMPLEX SUBUNIT 3"/>
    <property type="match status" value="1"/>
</dbReference>
<dbReference type="PANTHER" id="PTHR13305">
    <property type="entry name" value="RIBOSOME BIOGENESIS PROTEIN NOP10"/>
    <property type="match status" value="1"/>
</dbReference>
<dbReference type="Pfam" id="PF04135">
    <property type="entry name" value="Nop10p"/>
    <property type="match status" value="1"/>
</dbReference>
<dbReference type="SUPFAM" id="SSF144210">
    <property type="entry name" value="Nop10-like SnoRNP"/>
    <property type="match status" value="1"/>
</dbReference>
<feature type="chain" id="PRO_0000328028" description="H/ACA ribonucleoprotein complex subunit 3">
    <location>
        <begin position="1"/>
        <end position="64"/>
    </location>
</feature>
<reference key="1">
    <citation type="journal article" date="2005" name="Nature">
        <title>The genome of the social amoeba Dictyostelium discoideum.</title>
        <authorList>
            <person name="Eichinger L."/>
            <person name="Pachebat J.A."/>
            <person name="Gloeckner G."/>
            <person name="Rajandream M.A."/>
            <person name="Sucgang R."/>
            <person name="Berriman M."/>
            <person name="Song J."/>
            <person name="Olsen R."/>
            <person name="Szafranski K."/>
            <person name="Xu Q."/>
            <person name="Tunggal B."/>
            <person name="Kummerfeld S."/>
            <person name="Madera M."/>
            <person name="Konfortov B.A."/>
            <person name="Rivero F."/>
            <person name="Bankier A.T."/>
            <person name="Lehmann R."/>
            <person name="Hamlin N."/>
            <person name="Davies R."/>
            <person name="Gaudet P."/>
            <person name="Fey P."/>
            <person name="Pilcher K."/>
            <person name="Chen G."/>
            <person name="Saunders D."/>
            <person name="Sodergren E.J."/>
            <person name="Davis P."/>
            <person name="Kerhornou A."/>
            <person name="Nie X."/>
            <person name="Hall N."/>
            <person name="Anjard C."/>
            <person name="Hemphill L."/>
            <person name="Bason N."/>
            <person name="Farbrother P."/>
            <person name="Desany B."/>
            <person name="Just E."/>
            <person name="Morio T."/>
            <person name="Rost R."/>
            <person name="Churcher C.M."/>
            <person name="Cooper J."/>
            <person name="Haydock S."/>
            <person name="van Driessche N."/>
            <person name="Cronin A."/>
            <person name="Goodhead I."/>
            <person name="Muzny D.M."/>
            <person name="Mourier T."/>
            <person name="Pain A."/>
            <person name="Lu M."/>
            <person name="Harper D."/>
            <person name="Lindsay R."/>
            <person name="Hauser H."/>
            <person name="James K.D."/>
            <person name="Quiles M."/>
            <person name="Madan Babu M."/>
            <person name="Saito T."/>
            <person name="Buchrieser C."/>
            <person name="Wardroper A."/>
            <person name="Felder M."/>
            <person name="Thangavelu M."/>
            <person name="Johnson D."/>
            <person name="Knights A."/>
            <person name="Loulseged H."/>
            <person name="Mungall K.L."/>
            <person name="Oliver K."/>
            <person name="Price C."/>
            <person name="Quail M.A."/>
            <person name="Urushihara H."/>
            <person name="Hernandez J."/>
            <person name="Rabbinowitsch E."/>
            <person name="Steffen D."/>
            <person name="Sanders M."/>
            <person name="Ma J."/>
            <person name="Kohara Y."/>
            <person name="Sharp S."/>
            <person name="Simmonds M.N."/>
            <person name="Spiegler S."/>
            <person name="Tivey A."/>
            <person name="Sugano S."/>
            <person name="White B."/>
            <person name="Walker D."/>
            <person name="Woodward J.R."/>
            <person name="Winckler T."/>
            <person name="Tanaka Y."/>
            <person name="Shaulsky G."/>
            <person name="Schleicher M."/>
            <person name="Weinstock G.M."/>
            <person name="Rosenthal A."/>
            <person name="Cox E.C."/>
            <person name="Chisholm R.L."/>
            <person name="Gibbs R.A."/>
            <person name="Loomis W.F."/>
            <person name="Platzer M."/>
            <person name="Kay R.R."/>
            <person name="Williams J.G."/>
            <person name="Dear P.H."/>
            <person name="Noegel A.A."/>
            <person name="Barrell B.G."/>
            <person name="Kuspa A."/>
        </authorList>
    </citation>
    <scope>NUCLEOTIDE SEQUENCE [LARGE SCALE GENOMIC DNA]</scope>
    <source>
        <strain>AX4</strain>
    </source>
</reference>
<protein>
    <recommendedName>
        <fullName>H/ACA ribonucleoprotein complex subunit 3</fullName>
    </recommendedName>
    <alternativeName>
        <fullName>Nucleolar protein 10</fullName>
    </alternativeName>
    <alternativeName>
        <fullName>Nucleolar protein family A member 3</fullName>
    </alternativeName>
    <alternativeName>
        <fullName>snoRNP protein NOP10 homolog</fullName>
    </alternativeName>
</protein>
<evidence type="ECO:0000250" key="1"/>
<evidence type="ECO:0000305" key="2"/>
<sequence length="64" mass="7631">MHLMYYNDKDGQRVYTLKKESPNHEATYSAHPARFSVDDKYSRERIALKKRFGLLLTQQPPLEF</sequence>
<organism>
    <name type="scientific">Dictyostelium discoideum</name>
    <name type="common">Social amoeba</name>
    <dbReference type="NCBI Taxonomy" id="44689"/>
    <lineage>
        <taxon>Eukaryota</taxon>
        <taxon>Amoebozoa</taxon>
        <taxon>Evosea</taxon>
        <taxon>Eumycetozoa</taxon>
        <taxon>Dictyostelia</taxon>
        <taxon>Dictyosteliales</taxon>
        <taxon>Dictyosteliaceae</taxon>
        <taxon>Dictyostelium</taxon>
    </lineage>
</organism>
<proteinExistence type="inferred from homology"/>
<comment type="function">
    <text evidence="1">Required for ribosome biogenesis. Part of the H/ACA small nucleolar ribonucleoprotein (H/ACA snoRNP) complex, which catalyzes pseudouridylation of rRNA (By similarity).</text>
</comment>
<comment type="subunit">
    <text evidence="1">Part of the H/ACA small nucleolar ribonucleoprotein (H/ACA snoRNP) complex.</text>
</comment>
<comment type="subcellular location">
    <subcellularLocation>
        <location evidence="1">Nucleus</location>
        <location evidence="1">Nucleolus</location>
    </subcellularLocation>
</comment>
<comment type="similarity">
    <text evidence="2">Belongs to the NOP10 family.</text>
</comment>